<gene>
    <name type="primary">GMPS</name>
</gene>
<protein>
    <recommendedName>
        <fullName>GMP synthase [glutamine-hydrolyzing]</fullName>
        <ecNumber evidence="5">6.3.5.2</ecNumber>
    </recommendedName>
    <alternativeName>
        <fullName>GMP synthetase</fullName>
    </alternativeName>
    <alternativeName>
        <fullName>Glutamine amidotransferase</fullName>
    </alternativeName>
</protein>
<accession>P49915</accession>
<accession>A8K639</accession>
<accession>B4DXV7</accession>
<accession>F8W720</accession>
<comment type="function">
    <text evidence="5">Catalyzes the conversion of xanthine monophosphate (XMP) to GMP in the presence of glutamine and ATP through an adenyl-XMP intermediate.</text>
</comment>
<comment type="catalytic activity">
    <reaction evidence="5">
        <text>XMP + L-glutamine + ATP + H2O = GMP + L-glutamate + AMP + diphosphate + 2 H(+)</text>
        <dbReference type="Rhea" id="RHEA:11680"/>
        <dbReference type="ChEBI" id="CHEBI:15377"/>
        <dbReference type="ChEBI" id="CHEBI:15378"/>
        <dbReference type="ChEBI" id="CHEBI:29985"/>
        <dbReference type="ChEBI" id="CHEBI:30616"/>
        <dbReference type="ChEBI" id="CHEBI:33019"/>
        <dbReference type="ChEBI" id="CHEBI:57464"/>
        <dbReference type="ChEBI" id="CHEBI:58115"/>
        <dbReference type="ChEBI" id="CHEBI:58359"/>
        <dbReference type="ChEBI" id="CHEBI:456215"/>
        <dbReference type="EC" id="6.3.5.2"/>
    </reaction>
    <physiologicalReaction direction="left-to-right" evidence="8">
        <dbReference type="Rhea" id="RHEA:11681"/>
    </physiologicalReaction>
</comment>
<comment type="cofactor">
    <cofactor evidence="1">
        <name>Mg(2+)</name>
        <dbReference type="ChEBI" id="CHEBI:18420"/>
    </cofactor>
</comment>
<comment type="pathway">
    <text>Purine metabolism; GMP biosynthesis; GMP from XMP (L-Gln route): step 1/1.</text>
</comment>
<comment type="subunit">
    <text evidence="4">Homodimer.</text>
</comment>
<comment type="subcellular location">
    <subcellularLocation>
        <location evidence="5">Cytoplasm</location>
        <location evidence="5">Cytosol</location>
    </subcellularLocation>
</comment>
<comment type="alternative products">
    <event type="alternative splicing"/>
    <isoform>
        <id>P49915-1</id>
        <name>1</name>
        <sequence type="displayed"/>
    </isoform>
    <isoform>
        <id>P49915-2</id>
        <name>2</name>
        <sequence type="described" ref="VSP_053933"/>
    </isoform>
</comment>
<comment type="disease">
    <text>A chromosomal aberration involving GMPS is found in acute myeloid leukemias. Translocation t(3,11)(q25,q23) with KMT2A/MLL1.</text>
</comment>
<comment type="online information" name="Atlas of Genetics and Cytogenetics in Oncology and Haematology">
    <link uri="https://atlasgeneticsoncology.org/gene/229/GMPS"/>
</comment>
<dbReference type="EC" id="6.3.5.2" evidence="5"/>
<dbReference type="EMBL" id="U10860">
    <property type="protein sequence ID" value="AAA60331.1"/>
    <property type="molecule type" value="mRNA"/>
</dbReference>
<dbReference type="EMBL" id="AK291504">
    <property type="protein sequence ID" value="BAF84193.1"/>
    <property type="molecule type" value="mRNA"/>
</dbReference>
<dbReference type="EMBL" id="AK302148">
    <property type="protein sequence ID" value="BAG63519.1"/>
    <property type="molecule type" value="mRNA"/>
</dbReference>
<dbReference type="EMBL" id="AK315832">
    <property type="protein sequence ID" value="BAF98723.1"/>
    <property type="molecule type" value="mRNA"/>
</dbReference>
<dbReference type="EMBL" id="AC067721">
    <property type="status" value="NOT_ANNOTATED_CDS"/>
    <property type="molecule type" value="Genomic_DNA"/>
</dbReference>
<dbReference type="EMBL" id="AC104472">
    <property type="status" value="NOT_ANNOTATED_CDS"/>
    <property type="molecule type" value="Genomic_DNA"/>
</dbReference>
<dbReference type="EMBL" id="AC140753">
    <property type="status" value="NOT_ANNOTATED_CDS"/>
    <property type="molecule type" value="Genomic_DNA"/>
</dbReference>
<dbReference type="EMBL" id="CH471052">
    <property type="protein sequence ID" value="EAW78741.1"/>
    <property type="molecule type" value="Genomic_DNA"/>
</dbReference>
<dbReference type="EMBL" id="BC012178">
    <property type="protein sequence ID" value="AAH12178.1"/>
    <property type="molecule type" value="mRNA"/>
</dbReference>
<dbReference type="CCDS" id="CCDS46941.1">
    <molecule id="P49915-1"/>
</dbReference>
<dbReference type="PIR" id="A54847">
    <property type="entry name" value="A54847"/>
</dbReference>
<dbReference type="RefSeq" id="NP_003866.1">
    <molecule id="P49915-1"/>
    <property type="nucleotide sequence ID" value="NM_003875.3"/>
</dbReference>
<dbReference type="PDB" id="2VPI">
    <property type="method" value="X-ray"/>
    <property type="resolution" value="2.40 A"/>
    <property type="chains" value="A/B=25-219"/>
</dbReference>
<dbReference type="PDB" id="2VXO">
    <property type="method" value="X-ray"/>
    <property type="resolution" value="2.50 A"/>
    <property type="chains" value="A/B=20-693"/>
</dbReference>
<dbReference type="PDBsum" id="2VPI"/>
<dbReference type="PDBsum" id="2VXO"/>
<dbReference type="SMR" id="P49915"/>
<dbReference type="BioGRID" id="114360">
    <property type="interactions" value="176"/>
</dbReference>
<dbReference type="FunCoup" id="P49915">
    <property type="interactions" value="2528"/>
</dbReference>
<dbReference type="IntAct" id="P49915">
    <property type="interactions" value="48"/>
</dbReference>
<dbReference type="MINT" id="P49915"/>
<dbReference type="STRING" id="9606.ENSP00000419851"/>
<dbReference type="BindingDB" id="P49915"/>
<dbReference type="ChEMBL" id="CHEMBL5721"/>
<dbReference type="DrugBank" id="DB00993">
    <property type="generic name" value="Azathioprine"/>
</dbReference>
<dbReference type="DrugBank" id="DB00142">
    <property type="generic name" value="Glutamic acid"/>
</dbReference>
<dbReference type="DrugBank" id="DB00130">
    <property type="generic name" value="L-Glutamine"/>
</dbReference>
<dbReference type="MEROPS" id="C26.950"/>
<dbReference type="GlyCosmos" id="P49915">
    <property type="glycosylation" value="1 site, 1 glycan"/>
</dbReference>
<dbReference type="GlyGen" id="P49915">
    <property type="glycosylation" value="4 sites, 5 N-linked glycans (2 sites), 1 O-linked glycan (1 site)"/>
</dbReference>
<dbReference type="iPTMnet" id="P49915"/>
<dbReference type="MetOSite" id="P49915"/>
<dbReference type="PhosphoSitePlus" id="P49915"/>
<dbReference type="SwissPalm" id="P49915"/>
<dbReference type="BioMuta" id="GMPS"/>
<dbReference type="DMDM" id="1708072"/>
<dbReference type="REPRODUCTION-2DPAGE" id="IPI00029079"/>
<dbReference type="jPOST" id="P49915"/>
<dbReference type="MassIVE" id="P49915"/>
<dbReference type="PaxDb" id="9606-ENSP00000419851"/>
<dbReference type="PeptideAtlas" id="P49915"/>
<dbReference type="ProteomicsDB" id="29873"/>
<dbReference type="ProteomicsDB" id="56180">
    <molecule id="P49915-1"/>
</dbReference>
<dbReference type="Pumba" id="P49915"/>
<dbReference type="Antibodypedia" id="33632">
    <property type="antibodies" value="263 antibodies from 33 providers"/>
</dbReference>
<dbReference type="DNASU" id="8833"/>
<dbReference type="Ensembl" id="ENST00000295920.7">
    <molecule id="P49915-2"/>
    <property type="protein sequence ID" value="ENSP00000295920.7"/>
    <property type="gene ID" value="ENSG00000163655.16"/>
</dbReference>
<dbReference type="Ensembl" id="ENST00000496455.7">
    <molecule id="P49915-1"/>
    <property type="protein sequence ID" value="ENSP00000419851.1"/>
    <property type="gene ID" value="ENSG00000163655.16"/>
</dbReference>
<dbReference type="GeneID" id="8833"/>
<dbReference type="KEGG" id="hsa:8833"/>
<dbReference type="MANE-Select" id="ENST00000496455.7">
    <property type="protein sequence ID" value="ENSP00000419851.1"/>
    <property type="RefSeq nucleotide sequence ID" value="NM_003875.3"/>
    <property type="RefSeq protein sequence ID" value="NP_003866.1"/>
</dbReference>
<dbReference type="UCSC" id="uc003faq.4">
    <molecule id="P49915-1"/>
    <property type="organism name" value="human"/>
</dbReference>
<dbReference type="AGR" id="HGNC:4378"/>
<dbReference type="CTD" id="8833"/>
<dbReference type="DisGeNET" id="8833"/>
<dbReference type="GeneCards" id="GMPS"/>
<dbReference type="HGNC" id="HGNC:4378">
    <property type="gene designation" value="GMPS"/>
</dbReference>
<dbReference type="HPA" id="ENSG00000163655">
    <property type="expression patterns" value="Tissue enhanced (testis)"/>
</dbReference>
<dbReference type="MalaCards" id="GMPS"/>
<dbReference type="MIM" id="600358">
    <property type="type" value="gene"/>
</dbReference>
<dbReference type="neXtProt" id="NX_P49915"/>
<dbReference type="OpenTargets" id="ENSG00000163655"/>
<dbReference type="PharmGKB" id="PA28763"/>
<dbReference type="VEuPathDB" id="HostDB:ENSG00000163655"/>
<dbReference type="eggNOG" id="KOG1622">
    <property type="taxonomic scope" value="Eukaryota"/>
</dbReference>
<dbReference type="GeneTree" id="ENSGT00390000006591"/>
<dbReference type="HOGENOM" id="CLU_014340_0_2_1"/>
<dbReference type="InParanoid" id="P49915"/>
<dbReference type="OMA" id="IWQSFAV"/>
<dbReference type="OrthoDB" id="1724632at2759"/>
<dbReference type="PAN-GO" id="P49915">
    <property type="GO annotations" value="3 GO annotations based on evolutionary models"/>
</dbReference>
<dbReference type="PhylomeDB" id="P49915"/>
<dbReference type="TreeFam" id="TF106132"/>
<dbReference type="BRENDA" id="6.3.5.2">
    <property type="organism ID" value="2681"/>
</dbReference>
<dbReference type="PathwayCommons" id="P49915"/>
<dbReference type="Reactome" id="R-HSA-73817">
    <property type="pathway name" value="Purine ribonucleoside monophosphate biosynthesis"/>
</dbReference>
<dbReference type="Reactome" id="R-HSA-9748787">
    <property type="pathway name" value="Azathioprine ADME"/>
</dbReference>
<dbReference type="SignaLink" id="P49915"/>
<dbReference type="SIGNOR" id="P49915"/>
<dbReference type="UniPathway" id="UPA00189">
    <property type="reaction ID" value="UER00296"/>
</dbReference>
<dbReference type="BioGRID-ORCS" id="8833">
    <property type="hits" value="616 hits in 1156 CRISPR screens"/>
</dbReference>
<dbReference type="ChiTaRS" id="GMPS">
    <property type="organism name" value="human"/>
</dbReference>
<dbReference type="EvolutionaryTrace" id="P49915"/>
<dbReference type="GeneWiki" id="GMP_synthase"/>
<dbReference type="GenomeRNAi" id="8833"/>
<dbReference type="Pharos" id="P49915">
    <property type="development level" value="Tbio"/>
</dbReference>
<dbReference type="PRO" id="PR:P49915"/>
<dbReference type="Proteomes" id="UP000005640">
    <property type="component" value="Chromosome 3"/>
</dbReference>
<dbReference type="RNAct" id="P49915">
    <property type="molecule type" value="protein"/>
</dbReference>
<dbReference type="Bgee" id="ENSG00000163655">
    <property type="expression patterns" value="Expressed in left testis and 168 other cell types or tissues"/>
</dbReference>
<dbReference type="ExpressionAtlas" id="P49915">
    <property type="expression patterns" value="baseline and differential"/>
</dbReference>
<dbReference type="GO" id="GO:0005829">
    <property type="term" value="C:cytosol"/>
    <property type="evidence" value="ECO:0000314"/>
    <property type="project" value="HPA"/>
</dbReference>
<dbReference type="GO" id="GO:0005524">
    <property type="term" value="F:ATP binding"/>
    <property type="evidence" value="ECO:0007669"/>
    <property type="project" value="UniProtKB-KW"/>
</dbReference>
<dbReference type="GO" id="GO:0003922">
    <property type="term" value="F:GMP synthase (glutamine-hydrolyzing) activity"/>
    <property type="evidence" value="ECO:0000314"/>
    <property type="project" value="UniProtKB"/>
</dbReference>
<dbReference type="GO" id="GO:0003921">
    <property type="term" value="F:GMP synthase activity"/>
    <property type="evidence" value="ECO:0000314"/>
    <property type="project" value="MGI"/>
</dbReference>
<dbReference type="GO" id="GO:0006177">
    <property type="term" value="P:GMP biosynthetic process"/>
    <property type="evidence" value="ECO:0000314"/>
    <property type="project" value="MGI"/>
</dbReference>
<dbReference type="GO" id="GO:0009113">
    <property type="term" value="P:purine nucleobase biosynthetic process"/>
    <property type="evidence" value="ECO:0000304"/>
    <property type="project" value="ProtInc"/>
</dbReference>
<dbReference type="GO" id="GO:0009168">
    <property type="term" value="P:purine ribonucleoside monophosphate biosynthetic process"/>
    <property type="evidence" value="ECO:0000304"/>
    <property type="project" value="Reactome"/>
</dbReference>
<dbReference type="CDD" id="cd01742">
    <property type="entry name" value="GATase1_GMP_Synthase"/>
    <property type="match status" value="1"/>
</dbReference>
<dbReference type="CDD" id="cd01997">
    <property type="entry name" value="GMP_synthase_C"/>
    <property type="match status" value="1"/>
</dbReference>
<dbReference type="FunFam" id="3.30.300.10:FF:000008">
    <property type="entry name" value="GMP synthase [glutamine-hydrolyzing]"/>
    <property type="match status" value="1"/>
</dbReference>
<dbReference type="FunFam" id="3.30.300.10:FF:000009">
    <property type="entry name" value="GMP synthase [glutamine-hydrolyzing]"/>
    <property type="match status" value="1"/>
</dbReference>
<dbReference type="FunFam" id="3.40.50.620:FF:000044">
    <property type="entry name" value="GMP synthase [glutamine-hydrolyzing]"/>
    <property type="match status" value="1"/>
</dbReference>
<dbReference type="FunFam" id="3.40.50.880:FF:000013">
    <property type="entry name" value="GMP synthase [glutamine-hydrolyzing]"/>
    <property type="match status" value="1"/>
</dbReference>
<dbReference type="Gene3D" id="3.30.300.10">
    <property type="match status" value="2"/>
</dbReference>
<dbReference type="Gene3D" id="3.40.50.880">
    <property type="match status" value="1"/>
</dbReference>
<dbReference type="Gene3D" id="3.40.50.620">
    <property type="entry name" value="HUPs"/>
    <property type="match status" value="1"/>
</dbReference>
<dbReference type="InterPro" id="IPR029062">
    <property type="entry name" value="Class_I_gatase-like"/>
</dbReference>
<dbReference type="InterPro" id="IPR017926">
    <property type="entry name" value="GATASE"/>
</dbReference>
<dbReference type="InterPro" id="IPR001674">
    <property type="entry name" value="GMP_synth_C"/>
</dbReference>
<dbReference type="InterPro" id="IPR004739">
    <property type="entry name" value="GMP_synth_GATase"/>
</dbReference>
<dbReference type="InterPro" id="IPR025777">
    <property type="entry name" value="GMPS_ATP_PPase_dom"/>
</dbReference>
<dbReference type="InterPro" id="IPR022310">
    <property type="entry name" value="NAD/GMP_synthase"/>
</dbReference>
<dbReference type="InterPro" id="IPR014729">
    <property type="entry name" value="Rossmann-like_a/b/a_fold"/>
</dbReference>
<dbReference type="NCBIfam" id="TIGR00888">
    <property type="entry name" value="guaA_Nterm"/>
    <property type="match status" value="1"/>
</dbReference>
<dbReference type="NCBIfam" id="NF000848">
    <property type="entry name" value="PRK00074.1"/>
    <property type="match status" value="1"/>
</dbReference>
<dbReference type="PANTHER" id="PTHR11922:SF2">
    <property type="entry name" value="GMP SYNTHASE [GLUTAMINE-HYDROLYZING]"/>
    <property type="match status" value="1"/>
</dbReference>
<dbReference type="PANTHER" id="PTHR11922">
    <property type="entry name" value="GMP SYNTHASE-RELATED"/>
    <property type="match status" value="1"/>
</dbReference>
<dbReference type="Pfam" id="PF00117">
    <property type="entry name" value="GATase"/>
    <property type="match status" value="1"/>
</dbReference>
<dbReference type="Pfam" id="PF00958">
    <property type="entry name" value="GMP_synt_C"/>
    <property type="match status" value="1"/>
</dbReference>
<dbReference type="Pfam" id="PF02540">
    <property type="entry name" value="NAD_synthase"/>
    <property type="match status" value="1"/>
</dbReference>
<dbReference type="PRINTS" id="PR00097">
    <property type="entry name" value="ANTSNTHASEII"/>
</dbReference>
<dbReference type="PRINTS" id="PR00096">
    <property type="entry name" value="GATASE"/>
</dbReference>
<dbReference type="SUPFAM" id="SSF52402">
    <property type="entry name" value="Adenine nucleotide alpha hydrolases-like"/>
    <property type="match status" value="1"/>
</dbReference>
<dbReference type="SUPFAM" id="SSF52317">
    <property type="entry name" value="Class I glutamine amidotransferase-like"/>
    <property type="match status" value="1"/>
</dbReference>
<dbReference type="SUPFAM" id="SSF54810">
    <property type="entry name" value="GMP synthetase C-terminal dimerisation domain"/>
    <property type="match status" value="2"/>
</dbReference>
<dbReference type="PROSITE" id="PS51273">
    <property type="entry name" value="GATASE_TYPE_1"/>
    <property type="match status" value="1"/>
</dbReference>
<dbReference type="PROSITE" id="PS51553">
    <property type="entry name" value="GMPS_ATP_PPASE"/>
    <property type="match status" value="1"/>
</dbReference>
<evidence type="ECO:0000250" key="1">
    <source>
        <dbReference type="UniProtKB" id="Q4V7C6"/>
    </source>
</evidence>
<evidence type="ECO:0000255" key="2">
    <source>
        <dbReference type="PROSITE-ProRule" id="PRU00605"/>
    </source>
</evidence>
<evidence type="ECO:0000255" key="3">
    <source>
        <dbReference type="PROSITE-ProRule" id="PRU00886"/>
    </source>
</evidence>
<evidence type="ECO:0000269" key="4">
    <source>
    </source>
</evidence>
<evidence type="ECO:0000269" key="5">
    <source>
    </source>
</evidence>
<evidence type="ECO:0000303" key="6">
    <source>
    </source>
</evidence>
<evidence type="ECO:0000305" key="7"/>
<evidence type="ECO:0000305" key="8">
    <source>
    </source>
</evidence>
<evidence type="ECO:0007744" key="9">
    <source>
        <dbReference type="PDB" id="2VXO"/>
    </source>
</evidence>
<evidence type="ECO:0007744" key="10">
    <source>
    </source>
</evidence>
<evidence type="ECO:0007744" key="11">
    <source>
    </source>
</evidence>
<evidence type="ECO:0007744" key="12">
    <source>
    </source>
</evidence>
<evidence type="ECO:0007744" key="13">
    <source>
    </source>
</evidence>
<evidence type="ECO:0007744" key="14">
    <source>
    </source>
</evidence>
<evidence type="ECO:0007829" key="15">
    <source>
        <dbReference type="PDB" id="2VPI"/>
    </source>
</evidence>
<evidence type="ECO:0007829" key="16">
    <source>
        <dbReference type="PDB" id="2VXO"/>
    </source>
</evidence>
<keyword id="KW-0002">3D-structure</keyword>
<keyword id="KW-0007">Acetylation</keyword>
<keyword id="KW-0025">Alternative splicing</keyword>
<keyword id="KW-0067">ATP-binding</keyword>
<keyword id="KW-0160">Chromosomal rearrangement</keyword>
<keyword id="KW-0963">Cytoplasm</keyword>
<keyword id="KW-0903">Direct protein sequencing</keyword>
<keyword id="KW-0315">Glutamine amidotransferase</keyword>
<keyword id="KW-0332">GMP biosynthesis</keyword>
<keyword id="KW-0436">Ligase</keyword>
<keyword id="KW-0547">Nucleotide-binding</keyword>
<keyword id="KW-0597">Phosphoprotein</keyword>
<keyword id="KW-1267">Proteomics identification</keyword>
<keyword id="KW-0656">Proto-oncogene</keyword>
<keyword id="KW-0658">Purine biosynthesis</keyword>
<keyword id="KW-1185">Reference proteome</keyword>
<sequence>MALCNGDSKLENAGGDLKDGHHHYEGAVVILDAGAQYGKVIDRRVRELFVQSEIFPLETPAFAIKEQGFRAIIISGGPNSVYAEDAPWFDPAIFTIGKPVLGICYGMQMMNKVFGGTVHKKSVREDGVFNISVDNTCSLFRGLQKEEVVLLTHGDSVDKVADGFKVVARSGNIVAGIANESKKLYGAQFHPEVGLTENGKVILKNFLYDIAGCSGTFTVQNRELECIREIKERVGTSKVLVLLSGGVDSTVCTALLNRALNQEQVIAVHIDNGFMRKRESQSVEEALKKLGIQVKVINAAHSFYNGTTTLPISDEDRTPRKRISKTLNMTTSPEEKRKIIGDTFVKIANEVIGEMNLKPEEVFLAQGTLRPDLIESASLVASGKAELIKTHHNDTELIRKLREEGKVIEPLKDFHKDEVRILGRELGLPEELVSRHPFPGPGLAIRVICAEEPYICKDFPETNNILKIVADFSASVKKPHTLLQRVKACTTEEDQEKLMQITSLHSLNAFLLPIKTVGVQGDCRSYSYVCGISSKDEPDWESLIFLARLIPRMCHNVNRVVYIFGPPVKEPPTDVTPTFLTTGVLSTLRQADFEAHNILRESGYAGKISQMPVILTPLHFDRDPLQKQPSCQRSVVIRTFITSDFMTGIPATPGNEIPVEVVLKMVTEIKKIPGISRIMYDLTSKPPGTTEWE</sequence>
<proteinExistence type="evidence at protein level"/>
<name>GUAA_HUMAN</name>
<reference key="1">
    <citation type="journal article" date="1994" name="J. Biol. Chem.">
        <title>Human GMP synthetase. Protein purification, cloning, and functional expression of cDNA.</title>
        <authorList>
            <person name="Hirst M."/>
            <person name="Haliday E."/>
            <person name="Nakamura J."/>
            <person name="Lou L."/>
        </authorList>
    </citation>
    <scope>NUCLEOTIDE SEQUENCE [MRNA] (ISOFORM 1)</scope>
    <scope>PARTIAL PROTEIN SEQUENCE</scope>
    <scope>FUNCTION</scope>
    <scope>CATALYTIC ACTIVITY</scope>
    <scope>SUBCELLULAR LOCATION</scope>
</reference>
<reference key="2">
    <citation type="journal article" date="2004" name="Nat. Genet.">
        <title>Complete sequencing and characterization of 21,243 full-length human cDNAs.</title>
        <authorList>
            <person name="Ota T."/>
            <person name="Suzuki Y."/>
            <person name="Nishikawa T."/>
            <person name="Otsuki T."/>
            <person name="Sugiyama T."/>
            <person name="Irie R."/>
            <person name="Wakamatsu A."/>
            <person name="Hayashi K."/>
            <person name="Sato H."/>
            <person name="Nagai K."/>
            <person name="Kimura K."/>
            <person name="Makita H."/>
            <person name="Sekine M."/>
            <person name="Obayashi M."/>
            <person name="Nishi T."/>
            <person name="Shibahara T."/>
            <person name="Tanaka T."/>
            <person name="Ishii S."/>
            <person name="Yamamoto J."/>
            <person name="Saito K."/>
            <person name="Kawai Y."/>
            <person name="Isono Y."/>
            <person name="Nakamura Y."/>
            <person name="Nagahari K."/>
            <person name="Murakami K."/>
            <person name="Yasuda T."/>
            <person name="Iwayanagi T."/>
            <person name="Wagatsuma M."/>
            <person name="Shiratori A."/>
            <person name="Sudo H."/>
            <person name="Hosoiri T."/>
            <person name="Kaku Y."/>
            <person name="Kodaira H."/>
            <person name="Kondo H."/>
            <person name="Sugawara M."/>
            <person name="Takahashi M."/>
            <person name="Kanda K."/>
            <person name="Yokoi T."/>
            <person name="Furuya T."/>
            <person name="Kikkawa E."/>
            <person name="Omura Y."/>
            <person name="Abe K."/>
            <person name="Kamihara K."/>
            <person name="Katsuta N."/>
            <person name="Sato K."/>
            <person name="Tanikawa M."/>
            <person name="Yamazaki M."/>
            <person name="Ninomiya K."/>
            <person name="Ishibashi T."/>
            <person name="Yamashita H."/>
            <person name="Murakawa K."/>
            <person name="Fujimori K."/>
            <person name="Tanai H."/>
            <person name="Kimata M."/>
            <person name="Watanabe M."/>
            <person name="Hiraoka S."/>
            <person name="Chiba Y."/>
            <person name="Ishida S."/>
            <person name="Ono Y."/>
            <person name="Takiguchi S."/>
            <person name="Watanabe S."/>
            <person name="Yosida M."/>
            <person name="Hotuta T."/>
            <person name="Kusano J."/>
            <person name="Kanehori K."/>
            <person name="Takahashi-Fujii A."/>
            <person name="Hara H."/>
            <person name="Tanase T.-O."/>
            <person name="Nomura Y."/>
            <person name="Togiya S."/>
            <person name="Komai F."/>
            <person name="Hara R."/>
            <person name="Takeuchi K."/>
            <person name="Arita M."/>
            <person name="Imose N."/>
            <person name="Musashino K."/>
            <person name="Yuuki H."/>
            <person name="Oshima A."/>
            <person name="Sasaki N."/>
            <person name="Aotsuka S."/>
            <person name="Yoshikawa Y."/>
            <person name="Matsunawa H."/>
            <person name="Ichihara T."/>
            <person name="Shiohata N."/>
            <person name="Sano S."/>
            <person name="Moriya S."/>
            <person name="Momiyama H."/>
            <person name="Satoh N."/>
            <person name="Takami S."/>
            <person name="Terashima Y."/>
            <person name="Suzuki O."/>
            <person name="Nakagawa S."/>
            <person name="Senoh A."/>
            <person name="Mizoguchi H."/>
            <person name="Goto Y."/>
            <person name="Shimizu F."/>
            <person name="Wakebe H."/>
            <person name="Hishigaki H."/>
            <person name="Watanabe T."/>
            <person name="Sugiyama A."/>
            <person name="Takemoto M."/>
            <person name="Kawakami B."/>
            <person name="Yamazaki M."/>
            <person name="Watanabe K."/>
            <person name="Kumagai A."/>
            <person name="Itakura S."/>
            <person name="Fukuzumi Y."/>
            <person name="Fujimori Y."/>
            <person name="Komiyama M."/>
            <person name="Tashiro H."/>
            <person name="Tanigami A."/>
            <person name="Fujiwara T."/>
            <person name="Ono T."/>
            <person name="Yamada K."/>
            <person name="Fujii Y."/>
            <person name="Ozaki K."/>
            <person name="Hirao M."/>
            <person name="Ohmori Y."/>
            <person name="Kawabata A."/>
            <person name="Hikiji T."/>
            <person name="Kobatake N."/>
            <person name="Inagaki H."/>
            <person name="Ikema Y."/>
            <person name="Okamoto S."/>
            <person name="Okitani R."/>
            <person name="Kawakami T."/>
            <person name="Noguchi S."/>
            <person name="Itoh T."/>
            <person name="Shigeta K."/>
            <person name="Senba T."/>
            <person name="Matsumura K."/>
            <person name="Nakajima Y."/>
            <person name="Mizuno T."/>
            <person name="Morinaga M."/>
            <person name="Sasaki M."/>
            <person name="Togashi T."/>
            <person name="Oyama M."/>
            <person name="Hata H."/>
            <person name="Watanabe M."/>
            <person name="Komatsu T."/>
            <person name="Mizushima-Sugano J."/>
            <person name="Satoh T."/>
            <person name="Shirai Y."/>
            <person name="Takahashi Y."/>
            <person name="Nakagawa K."/>
            <person name="Okumura K."/>
            <person name="Nagase T."/>
            <person name="Nomura N."/>
            <person name="Kikuchi H."/>
            <person name="Masuho Y."/>
            <person name="Yamashita R."/>
            <person name="Nakai K."/>
            <person name="Yada T."/>
            <person name="Nakamura Y."/>
            <person name="Ohara O."/>
            <person name="Isogai T."/>
            <person name="Sugano S."/>
        </authorList>
    </citation>
    <scope>NUCLEOTIDE SEQUENCE [LARGE SCALE MRNA] (ISOFORMS 1 AND 2)</scope>
    <source>
        <tissue>Testis</tissue>
    </source>
</reference>
<reference key="3">
    <citation type="journal article" date="2006" name="Nature">
        <title>The DNA sequence, annotation and analysis of human chromosome 3.</title>
        <authorList>
            <person name="Muzny D.M."/>
            <person name="Scherer S.E."/>
            <person name="Kaul R."/>
            <person name="Wang J."/>
            <person name="Yu J."/>
            <person name="Sudbrak R."/>
            <person name="Buhay C.J."/>
            <person name="Chen R."/>
            <person name="Cree A."/>
            <person name="Ding Y."/>
            <person name="Dugan-Rocha S."/>
            <person name="Gill R."/>
            <person name="Gunaratne P."/>
            <person name="Harris R.A."/>
            <person name="Hawes A.C."/>
            <person name="Hernandez J."/>
            <person name="Hodgson A.V."/>
            <person name="Hume J."/>
            <person name="Jackson A."/>
            <person name="Khan Z.M."/>
            <person name="Kovar-Smith C."/>
            <person name="Lewis L.R."/>
            <person name="Lozado R.J."/>
            <person name="Metzker M.L."/>
            <person name="Milosavljevic A."/>
            <person name="Miner G.R."/>
            <person name="Morgan M.B."/>
            <person name="Nazareth L.V."/>
            <person name="Scott G."/>
            <person name="Sodergren E."/>
            <person name="Song X.-Z."/>
            <person name="Steffen D."/>
            <person name="Wei S."/>
            <person name="Wheeler D.A."/>
            <person name="Wright M.W."/>
            <person name="Worley K.C."/>
            <person name="Yuan Y."/>
            <person name="Zhang Z."/>
            <person name="Adams C.Q."/>
            <person name="Ansari-Lari M.A."/>
            <person name="Ayele M."/>
            <person name="Brown M.J."/>
            <person name="Chen G."/>
            <person name="Chen Z."/>
            <person name="Clendenning J."/>
            <person name="Clerc-Blankenburg K.P."/>
            <person name="Chen R."/>
            <person name="Chen Z."/>
            <person name="Davis C."/>
            <person name="Delgado O."/>
            <person name="Dinh H.H."/>
            <person name="Dong W."/>
            <person name="Draper H."/>
            <person name="Ernst S."/>
            <person name="Fu G."/>
            <person name="Gonzalez-Garay M.L."/>
            <person name="Garcia D.K."/>
            <person name="Gillett W."/>
            <person name="Gu J."/>
            <person name="Hao B."/>
            <person name="Haugen E."/>
            <person name="Havlak P."/>
            <person name="He X."/>
            <person name="Hennig S."/>
            <person name="Hu S."/>
            <person name="Huang W."/>
            <person name="Jackson L.R."/>
            <person name="Jacob L.S."/>
            <person name="Kelly S.H."/>
            <person name="Kube M."/>
            <person name="Levy R."/>
            <person name="Li Z."/>
            <person name="Liu B."/>
            <person name="Liu J."/>
            <person name="Liu W."/>
            <person name="Lu J."/>
            <person name="Maheshwari M."/>
            <person name="Nguyen B.-V."/>
            <person name="Okwuonu G.O."/>
            <person name="Palmeiri A."/>
            <person name="Pasternak S."/>
            <person name="Perez L.M."/>
            <person name="Phelps K.A."/>
            <person name="Plopper F.J."/>
            <person name="Qiang B."/>
            <person name="Raymond C."/>
            <person name="Rodriguez R."/>
            <person name="Saenphimmachak C."/>
            <person name="Santibanez J."/>
            <person name="Shen H."/>
            <person name="Shen Y."/>
            <person name="Subramanian S."/>
            <person name="Tabor P.E."/>
            <person name="Verduzco D."/>
            <person name="Waldron L."/>
            <person name="Wang J."/>
            <person name="Wang J."/>
            <person name="Wang Q."/>
            <person name="Williams G.A."/>
            <person name="Wong G.K.-S."/>
            <person name="Yao Z."/>
            <person name="Zhang J."/>
            <person name="Zhang X."/>
            <person name="Zhao G."/>
            <person name="Zhou J."/>
            <person name="Zhou Y."/>
            <person name="Nelson D."/>
            <person name="Lehrach H."/>
            <person name="Reinhardt R."/>
            <person name="Naylor S.L."/>
            <person name="Yang H."/>
            <person name="Olson M."/>
            <person name="Weinstock G."/>
            <person name="Gibbs R.A."/>
        </authorList>
    </citation>
    <scope>NUCLEOTIDE SEQUENCE [LARGE SCALE GENOMIC DNA]</scope>
</reference>
<reference key="4">
    <citation type="submission" date="2005-09" db="EMBL/GenBank/DDBJ databases">
        <authorList>
            <person name="Mural R.J."/>
            <person name="Istrail S."/>
            <person name="Sutton G."/>
            <person name="Florea L."/>
            <person name="Halpern A.L."/>
            <person name="Mobarry C.M."/>
            <person name="Lippert R."/>
            <person name="Walenz B."/>
            <person name="Shatkay H."/>
            <person name="Dew I."/>
            <person name="Miller J.R."/>
            <person name="Flanigan M.J."/>
            <person name="Edwards N.J."/>
            <person name="Bolanos R."/>
            <person name="Fasulo D."/>
            <person name="Halldorsson B.V."/>
            <person name="Hannenhalli S."/>
            <person name="Turner R."/>
            <person name="Yooseph S."/>
            <person name="Lu F."/>
            <person name="Nusskern D.R."/>
            <person name="Shue B.C."/>
            <person name="Zheng X.H."/>
            <person name="Zhong F."/>
            <person name="Delcher A.L."/>
            <person name="Huson D.H."/>
            <person name="Kravitz S.A."/>
            <person name="Mouchard L."/>
            <person name="Reinert K."/>
            <person name="Remington K.A."/>
            <person name="Clark A.G."/>
            <person name="Waterman M.S."/>
            <person name="Eichler E.E."/>
            <person name="Adams M.D."/>
            <person name="Hunkapiller M.W."/>
            <person name="Myers E.W."/>
            <person name="Venter J.C."/>
        </authorList>
    </citation>
    <scope>NUCLEOTIDE SEQUENCE [LARGE SCALE GENOMIC DNA]</scope>
</reference>
<reference key="5">
    <citation type="journal article" date="2004" name="Genome Res.">
        <title>The status, quality, and expansion of the NIH full-length cDNA project: the Mammalian Gene Collection (MGC).</title>
        <authorList>
            <consortium name="The MGC Project Team"/>
        </authorList>
    </citation>
    <scope>NUCLEOTIDE SEQUENCE [LARGE SCALE MRNA] (ISOFORM 1)</scope>
    <source>
        <tissue>Placenta</tissue>
    </source>
</reference>
<reference key="6">
    <citation type="journal article" date="2000" name="Blood">
        <title>t(3;11) translocation in treatment-related acute myeloid leukemia fuses MLL with the GMPS (guanosine 5-prime monophosphate synthetase) gene.</title>
        <authorList>
            <person name="Pegram L.D."/>
            <person name="Megonigal M.D."/>
            <person name="Lange B.J."/>
            <person name="Nowell P.C."/>
            <person name="Rowley J.D."/>
            <person name="Rappaport E.F."/>
            <person name="Felix C.A."/>
        </authorList>
    </citation>
    <scope>CHROMOSOMAL TRANSLOCATION WITH KMT2A/MLL1</scope>
</reference>
<reference key="7">
    <citation type="journal article" date="2008" name="Proc. Natl. Acad. Sci. U.S.A.">
        <title>A quantitative atlas of mitotic phosphorylation.</title>
        <authorList>
            <person name="Dephoure N."/>
            <person name="Zhou C."/>
            <person name="Villen J."/>
            <person name="Beausoleil S.A."/>
            <person name="Bakalarski C.E."/>
            <person name="Elledge S.J."/>
            <person name="Gygi S.P."/>
        </authorList>
    </citation>
    <scope>IDENTIFICATION BY MASS SPECTROMETRY [LARGE SCALE ANALYSIS]</scope>
    <source>
        <tissue>Cervix carcinoma</tissue>
    </source>
</reference>
<reference key="8">
    <citation type="journal article" date="2009" name="Anal. Chem.">
        <title>Lys-N and trypsin cover complementary parts of the phosphoproteome in a refined SCX-based approach.</title>
        <authorList>
            <person name="Gauci S."/>
            <person name="Helbig A.O."/>
            <person name="Slijper M."/>
            <person name="Krijgsveld J."/>
            <person name="Heck A.J."/>
            <person name="Mohammed S."/>
        </authorList>
    </citation>
    <scope>ACETYLATION [LARGE SCALE ANALYSIS] AT ALA-2</scope>
    <scope>CLEAVAGE OF INITIATOR METHIONINE [LARGE SCALE ANALYSIS]</scope>
    <scope>IDENTIFICATION BY MASS SPECTROMETRY [LARGE SCALE ANALYSIS]</scope>
</reference>
<reference key="9">
    <citation type="journal article" date="2009" name="Sci. Signal.">
        <title>Quantitative phosphoproteomic analysis of T cell receptor signaling reveals system-wide modulation of protein-protein interactions.</title>
        <authorList>
            <person name="Mayya V."/>
            <person name="Lundgren D.H."/>
            <person name="Hwang S.-I."/>
            <person name="Rezaul K."/>
            <person name="Wu L."/>
            <person name="Eng J.K."/>
            <person name="Rodionov V."/>
            <person name="Han D.K."/>
        </authorList>
    </citation>
    <scope>IDENTIFICATION BY MASS SPECTROMETRY [LARGE SCALE ANALYSIS]</scope>
    <source>
        <tissue>Leukemic T-cell</tissue>
    </source>
</reference>
<reference key="10">
    <citation type="journal article" date="2009" name="Science">
        <title>Lysine acetylation targets protein complexes and co-regulates major cellular functions.</title>
        <authorList>
            <person name="Choudhary C."/>
            <person name="Kumar C."/>
            <person name="Gnad F."/>
            <person name="Nielsen M.L."/>
            <person name="Rehman M."/>
            <person name="Walther T.C."/>
            <person name="Olsen J.V."/>
            <person name="Mann M."/>
        </authorList>
    </citation>
    <scope>ACETYLATION [LARGE SCALE ANALYSIS] AT LYS-9</scope>
    <scope>IDENTIFICATION BY MASS SPECTROMETRY [LARGE SCALE ANALYSIS]</scope>
</reference>
<reference key="11">
    <citation type="journal article" date="2010" name="Sci. Signal.">
        <title>Quantitative phosphoproteomics reveals widespread full phosphorylation site occupancy during mitosis.</title>
        <authorList>
            <person name="Olsen J.V."/>
            <person name="Vermeulen M."/>
            <person name="Santamaria A."/>
            <person name="Kumar C."/>
            <person name="Miller M.L."/>
            <person name="Jensen L.J."/>
            <person name="Gnad F."/>
            <person name="Cox J."/>
            <person name="Jensen T.S."/>
            <person name="Nigg E.A."/>
            <person name="Brunak S."/>
            <person name="Mann M."/>
        </authorList>
    </citation>
    <scope>PHOSPHORYLATION [LARGE SCALE ANALYSIS] AT THR-318 AND SER-332</scope>
    <scope>IDENTIFICATION BY MASS SPECTROMETRY [LARGE SCALE ANALYSIS]</scope>
    <source>
        <tissue>Cervix carcinoma</tissue>
    </source>
</reference>
<reference key="12">
    <citation type="journal article" date="2011" name="BMC Syst. Biol.">
        <title>Initial characterization of the human central proteome.</title>
        <authorList>
            <person name="Burkard T.R."/>
            <person name="Planyavsky M."/>
            <person name="Kaupe I."/>
            <person name="Breitwieser F.P."/>
            <person name="Buerckstuemmer T."/>
            <person name="Bennett K.L."/>
            <person name="Superti-Furga G."/>
            <person name="Colinge J."/>
        </authorList>
    </citation>
    <scope>IDENTIFICATION BY MASS SPECTROMETRY [LARGE SCALE ANALYSIS]</scope>
</reference>
<reference key="13">
    <citation type="journal article" date="2011" name="Sci. Signal.">
        <title>System-wide temporal characterization of the proteome and phosphoproteome of human embryonic stem cell differentiation.</title>
        <authorList>
            <person name="Rigbolt K.T."/>
            <person name="Prokhorova T.A."/>
            <person name="Akimov V."/>
            <person name="Henningsen J."/>
            <person name="Johansen P.T."/>
            <person name="Kratchmarova I."/>
            <person name="Kassem M."/>
            <person name="Mann M."/>
            <person name="Olsen J.V."/>
            <person name="Blagoev B."/>
        </authorList>
    </citation>
    <scope>PHOSPHORYLATION [LARGE SCALE ANALYSIS] AT SER-332</scope>
    <scope>IDENTIFICATION BY MASS SPECTROMETRY [LARGE SCALE ANALYSIS]</scope>
</reference>
<reference key="14">
    <citation type="journal article" date="2013" name="J. Proteome Res.">
        <title>Toward a comprehensive characterization of a human cancer cell phosphoproteome.</title>
        <authorList>
            <person name="Zhou H."/>
            <person name="Di Palma S."/>
            <person name="Preisinger C."/>
            <person name="Peng M."/>
            <person name="Polat A.N."/>
            <person name="Heck A.J."/>
            <person name="Mohammed S."/>
        </authorList>
    </citation>
    <scope>PHOSPHORYLATION [LARGE SCALE ANALYSIS] AT SER-8 AND SER-332</scope>
    <scope>IDENTIFICATION BY MASS SPECTROMETRY [LARGE SCALE ANALYSIS]</scope>
    <source>
        <tissue>Cervix carcinoma</tissue>
        <tissue>Erythroleukemia</tissue>
    </source>
</reference>
<reference evidence="9" key="15">
    <citation type="journal article" date="2013" name="J. Mol. Biol.">
        <title>Substrate specificity and oligomerization of human GMP synthetase.</title>
        <authorList>
            <person name="Welin M."/>
            <person name="Lehtio L."/>
            <person name="Johansson A."/>
            <person name="Flodin S."/>
            <person name="Nyman T."/>
            <person name="Tresaugues L."/>
            <person name="Hammarstrom M."/>
            <person name="Graslund S."/>
            <person name="Nordlund P."/>
        </authorList>
    </citation>
    <scope>X-RAY CRYSTALLOGRAPHY (2.5 ANGSTROMS) OF 20-693 IN COMPLEX WITH XMP</scope>
    <scope>SUBSTRATE-BINDING SITES</scope>
    <scope>ACTIVE SITE</scope>
    <scope>SUBUNIT</scope>
</reference>
<feature type="initiator methionine" description="Removed" evidence="10">
    <location>
        <position position="1"/>
    </location>
</feature>
<feature type="chain" id="PRO_0000140257" description="GMP synthase [glutamine-hydrolyzing]">
    <location>
        <begin position="2"/>
        <end position="693"/>
    </location>
</feature>
<feature type="domain" description="Glutamine amidotransferase type-1" evidence="2">
    <location>
        <begin position="27"/>
        <end position="216"/>
    </location>
</feature>
<feature type="domain" description="GMPS ATP-PPase" evidence="3">
    <location>
        <begin position="217"/>
        <end position="435"/>
    </location>
</feature>
<feature type="active site" description="For GATase activity" evidence="2 4">
    <location>
        <position position="104"/>
    </location>
</feature>
<feature type="active site" description="For GATase activity" evidence="2 4">
    <location>
        <position position="190"/>
    </location>
</feature>
<feature type="active site" description="For GATase activity" evidence="2 4">
    <location>
        <position position="192"/>
    </location>
</feature>
<feature type="binding site" evidence="3">
    <location>
        <begin position="244"/>
        <end position="250"/>
    </location>
    <ligand>
        <name>ATP</name>
        <dbReference type="ChEBI" id="CHEBI:30616"/>
    </ligand>
</feature>
<feature type="binding site" evidence="4">
    <location>
        <position position="337"/>
    </location>
    <ligand>
        <name>XMP</name>
        <dbReference type="ChEBI" id="CHEBI:57464"/>
    </ligand>
</feature>
<feature type="binding site" evidence="4">
    <location>
        <position position="522"/>
    </location>
    <ligand>
        <name>XMP</name>
        <dbReference type="ChEBI" id="CHEBI:57464"/>
    </ligand>
</feature>
<feature type="binding site" evidence="4">
    <location>
        <position position="610"/>
    </location>
    <ligand>
        <name>XMP</name>
        <dbReference type="ChEBI" id="CHEBI:57464"/>
    </ligand>
</feature>
<feature type="binding site" evidence="4">
    <location>
        <position position="685"/>
    </location>
    <ligand>
        <name>XMP</name>
        <dbReference type="ChEBI" id="CHEBI:57464"/>
    </ligand>
</feature>
<feature type="binding site" evidence="4">
    <location>
        <position position="691"/>
    </location>
    <ligand>
        <name>XMP</name>
        <dbReference type="ChEBI" id="CHEBI:57464"/>
    </ligand>
</feature>
<feature type="modified residue" description="N-acetylalanine" evidence="10">
    <location>
        <position position="2"/>
    </location>
</feature>
<feature type="modified residue" description="Phosphoserine" evidence="14">
    <location>
        <position position="8"/>
    </location>
</feature>
<feature type="modified residue" description="N6-acetyllysine" evidence="11">
    <location>
        <position position="9"/>
    </location>
</feature>
<feature type="modified residue" description="Phosphothreonine" evidence="12">
    <location>
        <position position="318"/>
    </location>
</feature>
<feature type="modified residue" description="Phosphoserine" evidence="12 13 14">
    <location>
        <position position="332"/>
    </location>
</feature>
<feature type="splice variant" id="VSP_053933" description="In isoform 2." evidence="6">
    <location>
        <begin position="10"/>
        <end position="108"/>
    </location>
</feature>
<feature type="sequence conflict" description="In Ref. 2; BAG63519." evidence="7" ref="2">
    <original>N</original>
    <variation>D</variation>
    <location>
        <position position="261"/>
    </location>
</feature>
<feature type="sequence conflict" description="In Ref. 1; AA sequence." evidence="7" ref="1">
    <original>H</original>
    <variation>I</variation>
    <location>
        <position position="415"/>
    </location>
</feature>
<feature type="strand" evidence="15">
    <location>
        <begin position="28"/>
        <end position="32"/>
    </location>
</feature>
<feature type="turn" evidence="15">
    <location>
        <begin position="35"/>
        <end position="38"/>
    </location>
</feature>
<feature type="helix" evidence="15">
    <location>
        <begin position="39"/>
        <end position="47"/>
    </location>
</feature>
<feature type="strand" evidence="15">
    <location>
        <begin position="52"/>
        <end position="54"/>
    </location>
</feature>
<feature type="helix" evidence="15">
    <location>
        <begin position="61"/>
        <end position="67"/>
    </location>
</feature>
<feature type="strand" evidence="15">
    <location>
        <begin position="70"/>
        <end position="76"/>
    </location>
</feature>
<feature type="helix" evidence="15">
    <location>
        <begin position="91"/>
        <end position="94"/>
    </location>
</feature>
<feature type="strand" evidence="15">
    <location>
        <begin position="100"/>
        <end position="104"/>
    </location>
</feature>
<feature type="helix" evidence="15">
    <location>
        <begin position="105"/>
        <end position="113"/>
    </location>
</feature>
<feature type="strand" evidence="15">
    <location>
        <begin position="118"/>
        <end position="123"/>
    </location>
</feature>
<feature type="strand" evidence="15">
    <location>
        <begin position="127"/>
        <end position="133"/>
    </location>
</feature>
<feature type="helix" evidence="15">
    <location>
        <begin position="138"/>
        <end position="140"/>
    </location>
</feature>
<feature type="strand" evidence="15">
    <location>
        <begin position="145"/>
        <end position="151"/>
    </location>
</feature>
<feature type="strand" evidence="15">
    <location>
        <begin position="153"/>
        <end position="159"/>
    </location>
</feature>
<feature type="strand" evidence="15">
    <location>
        <begin position="165"/>
        <end position="170"/>
    </location>
</feature>
<feature type="strand" evidence="15">
    <location>
        <begin position="173"/>
        <end position="179"/>
    </location>
</feature>
<feature type="turn" evidence="15">
    <location>
        <begin position="180"/>
        <end position="183"/>
    </location>
</feature>
<feature type="strand" evidence="15">
    <location>
        <begin position="184"/>
        <end position="189"/>
    </location>
</feature>
<feature type="strand" evidence="16">
    <location>
        <begin position="193"/>
        <end position="196"/>
    </location>
</feature>
<feature type="helix" evidence="15">
    <location>
        <begin position="199"/>
        <end position="207"/>
    </location>
</feature>
<feature type="turn" evidence="15">
    <location>
        <begin position="208"/>
        <end position="211"/>
    </location>
</feature>
<feature type="helix" evidence="16">
    <location>
        <begin position="219"/>
        <end position="234"/>
    </location>
</feature>
<feature type="strand" evidence="16">
    <location>
        <begin position="238"/>
        <end position="242"/>
    </location>
</feature>
<feature type="helix" evidence="16">
    <location>
        <begin position="247"/>
        <end position="259"/>
    </location>
</feature>
<feature type="helix" evidence="16">
    <location>
        <begin position="262"/>
        <end position="264"/>
    </location>
</feature>
<feature type="strand" evidence="16">
    <location>
        <begin position="265"/>
        <end position="271"/>
    </location>
</feature>
<feature type="helix" evidence="16">
    <location>
        <begin position="281"/>
        <end position="289"/>
    </location>
</feature>
<feature type="strand" evidence="16">
    <location>
        <begin position="294"/>
        <end position="298"/>
    </location>
</feature>
<feature type="helix" evidence="16">
    <location>
        <begin position="300"/>
        <end position="304"/>
    </location>
</feature>
<feature type="helix" evidence="16">
    <location>
        <begin position="327"/>
        <end position="329"/>
    </location>
</feature>
<feature type="helix" evidence="16">
    <location>
        <begin position="333"/>
        <end position="354"/>
    </location>
</feature>
<feature type="strand" evidence="16">
    <location>
        <begin position="361"/>
        <end position="365"/>
    </location>
</feature>
<feature type="helix" evidence="16">
    <location>
        <begin position="377"/>
        <end position="382"/>
    </location>
</feature>
<feature type="helix" evidence="16">
    <location>
        <begin position="387"/>
        <end position="389"/>
    </location>
</feature>
<feature type="helix" evidence="16">
    <location>
        <begin position="396"/>
        <end position="403"/>
    </location>
</feature>
<feature type="helix" evidence="16">
    <location>
        <begin position="410"/>
        <end position="413"/>
    </location>
</feature>
<feature type="helix" evidence="16">
    <location>
        <begin position="416"/>
        <end position="425"/>
    </location>
</feature>
<feature type="helix" evidence="16">
    <location>
        <begin position="430"/>
        <end position="433"/>
    </location>
</feature>
<feature type="helix" evidence="16">
    <location>
        <begin position="442"/>
        <end position="446"/>
    </location>
</feature>
<feature type="strand" evidence="16">
    <location>
        <begin position="450"/>
        <end position="452"/>
    </location>
</feature>
<feature type="helix" evidence="16">
    <location>
        <begin position="459"/>
        <end position="470"/>
    </location>
</feature>
<feature type="helix" evidence="16">
    <location>
        <begin position="472"/>
        <end position="475"/>
    </location>
</feature>
<feature type="helix" evidence="16">
    <location>
        <begin position="481"/>
        <end position="489"/>
    </location>
</feature>
<feature type="helix" evidence="16">
    <location>
        <begin position="492"/>
        <end position="504"/>
    </location>
</feature>
<feature type="strand" evidence="16">
    <location>
        <begin position="507"/>
        <end position="520"/>
    </location>
</feature>
<feature type="strand" evidence="16">
    <location>
        <begin position="523"/>
        <end position="536"/>
    </location>
</feature>
<feature type="helix" evidence="16">
    <location>
        <begin position="540"/>
        <end position="553"/>
    </location>
</feature>
<feature type="strand" evidence="16">
    <location>
        <begin position="557"/>
        <end position="563"/>
    </location>
</feature>
<feature type="helix" evidence="16">
    <location>
        <begin position="582"/>
        <end position="601"/>
    </location>
</feature>
<feature type="helix" evidence="16">
    <location>
        <begin position="605"/>
        <end position="607"/>
    </location>
</feature>
<feature type="strand" evidence="16">
    <location>
        <begin position="613"/>
        <end position="617"/>
    </location>
</feature>
<feature type="helix" evidence="16">
    <location>
        <begin position="624"/>
        <end position="626"/>
    </location>
</feature>
<feature type="strand" evidence="16">
    <location>
        <begin position="633"/>
        <end position="637"/>
    </location>
</feature>
<feature type="strand" evidence="16">
    <location>
        <begin position="643"/>
        <end position="649"/>
    </location>
</feature>
<feature type="turn" evidence="16">
    <location>
        <begin position="654"/>
        <end position="656"/>
    </location>
</feature>
<feature type="helix" evidence="16">
    <location>
        <begin position="659"/>
        <end position="671"/>
    </location>
</feature>
<feature type="strand" evidence="16">
    <location>
        <begin position="675"/>
        <end position="681"/>
    </location>
</feature>
<organism>
    <name type="scientific">Homo sapiens</name>
    <name type="common">Human</name>
    <dbReference type="NCBI Taxonomy" id="9606"/>
    <lineage>
        <taxon>Eukaryota</taxon>
        <taxon>Metazoa</taxon>
        <taxon>Chordata</taxon>
        <taxon>Craniata</taxon>
        <taxon>Vertebrata</taxon>
        <taxon>Euteleostomi</taxon>
        <taxon>Mammalia</taxon>
        <taxon>Eutheria</taxon>
        <taxon>Euarchontoglires</taxon>
        <taxon>Primates</taxon>
        <taxon>Haplorrhini</taxon>
        <taxon>Catarrhini</taxon>
        <taxon>Hominidae</taxon>
        <taxon>Homo</taxon>
    </lineage>
</organism>